<organism>
    <name type="scientific">Clostridium botulinum (strain Langeland / NCTC 10281 / Type F)</name>
    <dbReference type="NCBI Taxonomy" id="441772"/>
    <lineage>
        <taxon>Bacteria</taxon>
        <taxon>Bacillati</taxon>
        <taxon>Bacillota</taxon>
        <taxon>Clostridia</taxon>
        <taxon>Eubacteriales</taxon>
        <taxon>Clostridiaceae</taxon>
        <taxon>Clostridium</taxon>
    </lineage>
</organism>
<gene>
    <name evidence="1" type="primary">rpsD2</name>
    <name type="ordered locus">CLI_3590</name>
</gene>
<accession>A7GJ02</accession>
<protein>
    <recommendedName>
        <fullName evidence="1">Small ribosomal subunit protein uS4B</fullName>
    </recommendedName>
    <alternativeName>
        <fullName evidence="2">30S ribosomal protein S4 2</fullName>
    </alternativeName>
</protein>
<reference key="1">
    <citation type="submission" date="2007-06" db="EMBL/GenBank/DDBJ databases">
        <authorList>
            <person name="Brinkac L.M."/>
            <person name="Daugherty S."/>
            <person name="Dodson R.J."/>
            <person name="Madupu R."/>
            <person name="Brown J.L."/>
            <person name="Bruce D."/>
            <person name="Detter C."/>
            <person name="Munk C."/>
            <person name="Smith L.A."/>
            <person name="Smith T.J."/>
            <person name="White O."/>
            <person name="Brettin T.S."/>
        </authorList>
    </citation>
    <scope>NUCLEOTIDE SEQUENCE [LARGE SCALE GENOMIC DNA]</scope>
    <source>
        <strain>Langeland / NCTC 10281 / Type F</strain>
    </source>
</reference>
<evidence type="ECO:0000255" key="1">
    <source>
        <dbReference type="HAMAP-Rule" id="MF_01306"/>
    </source>
</evidence>
<evidence type="ECO:0000305" key="2"/>
<sequence length="197" mass="23022">MAKIRDPRFKLSRRLGVNIYGHPKAMKRATRENSREGKKLSNYGKQLLEKQKIRSYYGVLEKQFLRYVKKAMKSKERTGDVLLRSLECRLDNIAYRIGFANSIRQARQMVNHGHILVNGSKVNIPSYEVKAGDVITLREKYRKNDEFADNFLSLKKFSLPYIEKDYDKFSGVLIKEPERDEIPIDANETLVVELYSK</sequence>
<name>RS4B_CLOBL</name>
<feature type="chain" id="PRO_0000322290" description="Small ribosomal subunit protein uS4B">
    <location>
        <begin position="1"/>
        <end position="197"/>
    </location>
</feature>
<feature type="domain" description="S4 RNA-binding" evidence="1">
    <location>
        <begin position="88"/>
        <end position="151"/>
    </location>
</feature>
<dbReference type="EMBL" id="CP000728">
    <property type="protein sequence ID" value="ABS39329.1"/>
    <property type="molecule type" value="Genomic_DNA"/>
</dbReference>
<dbReference type="SMR" id="A7GJ02"/>
<dbReference type="KEGG" id="cbf:CLI_3590"/>
<dbReference type="HOGENOM" id="CLU_092403_0_1_9"/>
<dbReference type="Proteomes" id="UP000002410">
    <property type="component" value="Chromosome"/>
</dbReference>
<dbReference type="GO" id="GO:0015935">
    <property type="term" value="C:small ribosomal subunit"/>
    <property type="evidence" value="ECO:0007669"/>
    <property type="project" value="InterPro"/>
</dbReference>
<dbReference type="GO" id="GO:0019843">
    <property type="term" value="F:rRNA binding"/>
    <property type="evidence" value="ECO:0007669"/>
    <property type="project" value="UniProtKB-UniRule"/>
</dbReference>
<dbReference type="GO" id="GO:0003735">
    <property type="term" value="F:structural constituent of ribosome"/>
    <property type="evidence" value="ECO:0007669"/>
    <property type="project" value="InterPro"/>
</dbReference>
<dbReference type="GO" id="GO:0042274">
    <property type="term" value="P:ribosomal small subunit biogenesis"/>
    <property type="evidence" value="ECO:0007669"/>
    <property type="project" value="TreeGrafter"/>
</dbReference>
<dbReference type="GO" id="GO:0006412">
    <property type="term" value="P:translation"/>
    <property type="evidence" value="ECO:0007669"/>
    <property type="project" value="UniProtKB-UniRule"/>
</dbReference>
<dbReference type="CDD" id="cd00165">
    <property type="entry name" value="S4"/>
    <property type="match status" value="1"/>
</dbReference>
<dbReference type="FunFam" id="3.10.290.10:FF:000001">
    <property type="entry name" value="30S ribosomal protein S4"/>
    <property type="match status" value="1"/>
</dbReference>
<dbReference type="Gene3D" id="1.10.1050.10">
    <property type="entry name" value="Ribosomal Protein S4 Delta 41, Chain A, domain 1"/>
    <property type="match status" value="1"/>
</dbReference>
<dbReference type="Gene3D" id="3.10.290.10">
    <property type="entry name" value="RNA-binding S4 domain"/>
    <property type="match status" value="1"/>
</dbReference>
<dbReference type="HAMAP" id="MF_01306_B">
    <property type="entry name" value="Ribosomal_uS4_B"/>
    <property type="match status" value="1"/>
</dbReference>
<dbReference type="InterPro" id="IPR022801">
    <property type="entry name" value="Ribosomal_uS4"/>
</dbReference>
<dbReference type="InterPro" id="IPR005709">
    <property type="entry name" value="Ribosomal_uS4_bac-type"/>
</dbReference>
<dbReference type="InterPro" id="IPR001912">
    <property type="entry name" value="Ribosomal_uS4_N"/>
</dbReference>
<dbReference type="InterPro" id="IPR002942">
    <property type="entry name" value="S4_RNA-bd"/>
</dbReference>
<dbReference type="InterPro" id="IPR036986">
    <property type="entry name" value="S4_RNA-bd_sf"/>
</dbReference>
<dbReference type="NCBIfam" id="NF003717">
    <property type="entry name" value="PRK05327.1"/>
    <property type="match status" value="1"/>
</dbReference>
<dbReference type="NCBIfam" id="TIGR01017">
    <property type="entry name" value="rpsD_bact"/>
    <property type="match status" value="1"/>
</dbReference>
<dbReference type="PANTHER" id="PTHR11831">
    <property type="entry name" value="30S 40S RIBOSOMAL PROTEIN"/>
    <property type="match status" value="1"/>
</dbReference>
<dbReference type="PANTHER" id="PTHR11831:SF4">
    <property type="entry name" value="SMALL RIBOSOMAL SUBUNIT PROTEIN US4M"/>
    <property type="match status" value="1"/>
</dbReference>
<dbReference type="Pfam" id="PF00163">
    <property type="entry name" value="Ribosomal_S4"/>
    <property type="match status" value="1"/>
</dbReference>
<dbReference type="Pfam" id="PF01479">
    <property type="entry name" value="S4"/>
    <property type="match status" value="1"/>
</dbReference>
<dbReference type="SMART" id="SM01390">
    <property type="entry name" value="Ribosomal_S4"/>
    <property type="match status" value="1"/>
</dbReference>
<dbReference type="SMART" id="SM00363">
    <property type="entry name" value="S4"/>
    <property type="match status" value="1"/>
</dbReference>
<dbReference type="SUPFAM" id="SSF55174">
    <property type="entry name" value="Alpha-L RNA-binding motif"/>
    <property type="match status" value="1"/>
</dbReference>
<dbReference type="PROSITE" id="PS50889">
    <property type="entry name" value="S4"/>
    <property type="match status" value="1"/>
</dbReference>
<proteinExistence type="inferred from homology"/>
<comment type="function">
    <text evidence="1">One of the primary rRNA binding proteins, it binds directly to 16S rRNA where it nucleates assembly of the body of the 30S subunit.</text>
</comment>
<comment type="function">
    <text evidence="1">With S5 and S12 plays an important role in translational accuracy.</text>
</comment>
<comment type="subunit">
    <text evidence="1">Part of the 30S ribosomal subunit. Contacts protein S5. The interaction surface between S4 and S5 is involved in control of translational fidelity.</text>
</comment>
<comment type="similarity">
    <text evidence="1">Belongs to the universal ribosomal protein uS4 family.</text>
</comment>
<keyword id="KW-0687">Ribonucleoprotein</keyword>
<keyword id="KW-0689">Ribosomal protein</keyword>
<keyword id="KW-0694">RNA-binding</keyword>
<keyword id="KW-0699">rRNA-binding</keyword>